<reference key="1">
    <citation type="submission" date="2006-01" db="EMBL/GenBank/DDBJ databases">
        <title>Cloning and characterization of a novel human C2H2 zinc finger gene, ZNF438.</title>
        <authorList>
            <person name="Zhong C.M."/>
            <person name="Wan B."/>
            <person name="Yu L."/>
        </authorList>
    </citation>
    <scope>NUCLEOTIDE SEQUENCE [MRNA] (ISOFORM 2)</scope>
</reference>
<reference key="2">
    <citation type="submission" date="2001-10" db="EMBL/GenBank/DDBJ databases">
        <authorList>
            <person name="Guo J.H."/>
            <person name="She X.Y."/>
            <person name="Yu L."/>
        </authorList>
    </citation>
    <scope>NUCLEOTIDE SEQUENCE [LARGE SCALE MRNA] (ISOFORM 1)</scope>
</reference>
<reference key="3">
    <citation type="journal article" date="2004" name="Nat. Genet.">
        <title>Complete sequencing and characterization of 21,243 full-length human cDNAs.</title>
        <authorList>
            <person name="Ota T."/>
            <person name="Suzuki Y."/>
            <person name="Nishikawa T."/>
            <person name="Otsuki T."/>
            <person name="Sugiyama T."/>
            <person name="Irie R."/>
            <person name="Wakamatsu A."/>
            <person name="Hayashi K."/>
            <person name="Sato H."/>
            <person name="Nagai K."/>
            <person name="Kimura K."/>
            <person name="Makita H."/>
            <person name="Sekine M."/>
            <person name="Obayashi M."/>
            <person name="Nishi T."/>
            <person name="Shibahara T."/>
            <person name="Tanaka T."/>
            <person name="Ishii S."/>
            <person name="Yamamoto J."/>
            <person name="Saito K."/>
            <person name="Kawai Y."/>
            <person name="Isono Y."/>
            <person name="Nakamura Y."/>
            <person name="Nagahari K."/>
            <person name="Murakami K."/>
            <person name="Yasuda T."/>
            <person name="Iwayanagi T."/>
            <person name="Wagatsuma M."/>
            <person name="Shiratori A."/>
            <person name="Sudo H."/>
            <person name="Hosoiri T."/>
            <person name="Kaku Y."/>
            <person name="Kodaira H."/>
            <person name="Kondo H."/>
            <person name="Sugawara M."/>
            <person name="Takahashi M."/>
            <person name="Kanda K."/>
            <person name="Yokoi T."/>
            <person name="Furuya T."/>
            <person name="Kikkawa E."/>
            <person name="Omura Y."/>
            <person name="Abe K."/>
            <person name="Kamihara K."/>
            <person name="Katsuta N."/>
            <person name="Sato K."/>
            <person name="Tanikawa M."/>
            <person name="Yamazaki M."/>
            <person name="Ninomiya K."/>
            <person name="Ishibashi T."/>
            <person name="Yamashita H."/>
            <person name="Murakawa K."/>
            <person name="Fujimori K."/>
            <person name="Tanai H."/>
            <person name="Kimata M."/>
            <person name="Watanabe M."/>
            <person name="Hiraoka S."/>
            <person name="Chiba Y."/>
            <person name="Ishida S."/>
            <person name="Ono Y."/>
            <person name="Takiguchi S."/>
            <person name="Watanabe S."/>
            <person name="Yosida M."/>
            <person name="Hotuta T."/>
            <person name="Kusano J."/>
            <person name="Kanehori K."/>
            <person name="Takahashi-Fujii A."/>
            <person name="Hara H."/>
            <person name="Tanase T.-O."/>
            <person name="Nomura Y."/>
            <person name="Togiya S."/>
            <person name="Komai F."/>
            <person name="Hara R."/>
            <person name="Takeuchi K."/>
            <person name="Arita M."/>
            <person name="Imose N."/>
            <person name="Musashino K."/>
            <person name="Yuuki H."/>
            <person name="Oshima A."/>
            <person name="Sasaki N."/>
            <person name="Aotsuka S."/>
            <person name="Yoshikawa Y."/>
            <person name="Matsunawa H."/>
            <person name="Ichihara T."/>
            <person name="Shiohata N."/>
            <person name="Sano S."/>
            <person name="Moriya S."/>
            <person name="Momiyama H."/>
            <person name="Satoh N."/>
            <person name="Takami S."/>
            <person name="Terashima Y."/>
            <person name="Suzuki O."/>
            <person name="Nakagawa S."/>
            <person name="Senoh A."/>
            <person name="Mizoguchi H."/>
            <person name="Goto Y."/>
            <person name="Shimizu F."/>
            <person name="Wakebe H."/>
            <person name="Hishigaki H."/>
            <person name="Watanabe T."/>
            <person name="Sugiyama A."/>
            <person name="Takemoto M."/>
            <person name="Kawakami B."/>
            <person name="Yamazaki M."/>
            <person name="Watanabe K."/>
            <person name="Kumagai A."/>
            <person name="Itakura S."/>
            <person name="Fukuzumi Y."/>
            <person name="Fujimori Y."/>
            <person name="Komiyama M."/>
            <person name="Tashiro H."/>
            <person name="Tanigami A."/>
            <person name="Fujiwara T."/>
            <person name="Ono T."/>
            <person name="Yamada K."/>
            <person name="Fujii Y."/>
            <person name="Ozaki K."/>
            <person name="Hirao M."/>
            <person name="Ohmori Y."/>
            <person name="Kawabata A."/>
            <person name="Hikiji T."/>
            <person name="Kobatake N."/>
            <person name="Inagaki H."/>
            <person name="Ikema Y."/>
            <person name="Okamoto S."/>
            <person name="Okitani R."/>
            <person name="Kawakami T."/>
            <person name="Noguchi S."/>
            <person name="Itoh T."/>
            <person name="Shigeta K."/>
            <person name="Senba T."/>
            <person name="Matsumura K."/>
            <person name="Nakajima Y."/>
            <person name="Mizuno T."/>
            <person name="Morinaga M."/>
            <person name="Sasaki M."/>
            <person name="Togashi T."/>
            <person name="Oyama M."/>
            <person name="Hata H."/>
            <person name="Watanabe M."/>
            <person name="Komatsu T."/>
            <person name="Mizushima-Sugano J."/>
            <person name="Satoh T."/>
            <person name="Shirai Y."/>
            <person name="Takahashi Y."/>
            <person name="Nakagawa K."/>
            <person name="Okumura K."/>
            <person name="Nagase T."/>
            <person name="Nomura N."/>
            <person name="Kikuchi H."/>
            <person name="Masuho Y."/>
            <person name="Yamashita R."/>
            <person name="Nakai K."/>
            <person name="Yada T."/>
            <person name="Nakamura Y."/>
            <person name="Ohara O."/>
            <person name="Isogai T."/>
            <person name="Sugano S."/>
        </authorList>
    </citation>
    <scope>NUCLEOTIDE SEQUENCE [LARGE SCALE MRNA] (ISOFORMS 1 AND 3)</scope>
    <scope>VARIANT SER-173</scope>
    <source>
        <tissue>Kidney</tissue>
        <tissue>Trachea</tissue>
    </source>
</reference>
<reference key="4">
    <citation type="journal article" date="2007" name="BMC Genomics">
        <title>The full-ORF clone resource of the German cDNA consortium.</title>
        <authorList>
            <person name="Bechtel S."/>
            <person name="Rosenfelder H."/>
            <person name="Duda A."/>
            <person name="Schmidt C.P."/>
            <person name="Ernst U."/>
            <person name="Wellenreuther R."/>
            <person name="Mehrle A."/>
            <person name="Schuster C."/>
            <person name="Bahr A."/>
            <person name="Bloecker H."/>
            <person name="Heubner D."/>
            <person name="Hoerlein A."/>
            <person name="Michel G."/>
            <person name="Wedler H."/>
            <person name="Koehrer K."/>
            <person name="Ottenwaelder B."/>
            <person name="Poustka A."/>
            <person name="Wiemann S."/>
            <person name="Schupp I."/>
        </authorList>
    </citation>
    <scope>NUCLEOTIDE SEQUENCE [LARGE SCALE MRNA] (ISOFORM 2)</scope>
    <scope>VARIANT SER-173</scope>
    <source>
        <tissue>Stomach</tissue>
    </source>
</reference>
<reference key="5">
    <citation type="journal article" date="2004" name="Nature">
        <title>The DNA sequence and comparative analysis of human chromosome 10.</title>
        <authorList>
            <person name="Deloukas P."/>
            <person name="Earthrowl M.E."/>
            <person name="Grafham D.V."/>
            <person name="Rubenfield M."/>
            <person name="French L."/>
            <person name="Steward C.A."/>
            <person name="Sims S.K."/>
            <person name="Jones M.C."/>
            <person name="Searle S."/>
            <person name="Scott C."/>
            <person name="Howe K."/>
            <person name="Hunt S.E."/>
            <person name="Andrews T.D."/>
            <person name="Gilbert J.G.R."/>
            <person name="Swarbreck D."/>
            <person name="Ashurst J.L."/>
            <person name="Taylor A."/>
            <person name="Battles J."/>
            <person name="Bird C.P."/>
            <person name="Ainscough R."/>
            <person name="Almeida J.P."/>
            <person name="Ashwell R.I.S."/>
            <person name="Ambrose K.D."/>
            <person name="Babbage A.K."/>
            <person name="Bagguley C.L."/>
            <person name="Bailey J."/>
            <person name="Banerjee R."/>
            <person name="Bates K."/>
            <person name="Beasley H."/>
            <person name="Bray-Allen S."/>
            <person name="Brown A.J."/>
            <person name="Brown J.Y."/>
            <person name="Burford D.C."/>
            <person name="Burrill W."/>
            <person name="Burton J."/>
            <person name="Cahill P."/>
            <person name="Camire D."/>
            <person name="Carter N.P."/>
            <person name="Chapman J.C."/>
            <person name="Clark S.Y."/>
            <person name="Clarke G."/>
            <person name="Clee C.M."/>
            <person name="Clegg S."/>
            <person name="Corby N."/>
            <person name="Coulson A."/>
            <person name="Dhami P."/>
            <person name="Dutta I."/>
            <person name="Dunn M."/>
            <person name="Faulkner L."/>
            <person name="Frankish A."/>
            <person name="Frankland J.A."/>
            <person name="Garner P."/>
            <person name="Garnett J."/>
            <person name="Gribble S."/>
            <person name="Griffiths C."/>
            <person name="Grocock R."/>
            <person name="Gustafson E."/>
            <person name="Hammond S."/>
            <person name="Harley J.L."/>
            <person name="Hart E."/>
            <person name="Heath P.D."/>
            <person name="Ho T.P."/>
            <person name="Hopkins B."/>
            <person name="Horne J."/>
            <person name="Howden P.J."/>
            <person name="Huckle E."/>
            <person name="Hynds C."/>
            <person name="Johnson C."/>
            <person name="Johnson D."/>
            <person name="Kana A."/>
            <person name="Kay M."/>
            <person name="Kimberley A.M."/>
            <person name="Kershaw J.K."/>
            <person name="Kokkinaki M."/>
            <person name="Laird G.K."/>
            <person name="Lawlor S."/>
            <person name="Lee H.M."/>
            <person name="Leongamornlert D.A."/>
            <person name="Laird G."/>
            <person name="Lloyd C."/>
            <person name="Lloyd D.M."/>
            <person name="Loveland J."/>
            <person name="Lovell J."/>
            <person name="McLaren S."/>
            <person name="McLay K.E."/>
            <person name="McMurray A."/>
            <person name="Mashreghi-Mohammadi M."/>
            <person name="Matthews L."/>
            <person name="Milne S."/>
            <person name="Nickerson T."/>
            <person name="Nguyen M."/>
            <person name="Overton-Larty E."/>
            <person name="Palmer S.A."/>
            <person name="Pearce A.V."/>
            <person name="Peck A.I."/>
            <person name="Pelan S."/>
            <person name="Phillimore B."/>
            <person name="Porter K."/>
            <person name="Rice C.M."/>
            <person name="Rogosin A."/>
            <person name="Ross M.T."/>
            <person name="Sarafidou T."/>
            <person name="Sehra H.K."/>
            <person name="Shownkeen R."/>
            <person name="Skuce C.D."/>
            <person name="Smith M."/>
            <person name="Standring L."/>
            <person name="Sycamore N."/>
            <person name="Tester J."/>
            <person name="Thorpe A."/>
            <person name="Torcasso W."/>
            <person name="Tracey A."/>
            <person name="Tromans A."/>
            <person name="Tsolas J."/>
            <person name="Wall M."/>
            <person name="Walsh J."/>
            <person name="Wang H."/>
            <person name="Weinstock K."/>
            <person name="West A.P."/>
            <person name="Willey D.L."/>
            <person name="Whitehead S.L."/>
            <person name="Wilming L."/>
            <person name="Wray P.W."/>
            <person name="Young L."/>
            <person name="Chen Y."/>
            <person name="Lovering R.C."/>
            <person name="Moschonas N.K."/>
            <person name="Siebert R."/>
            <person name="Fechtel K."/>
            <person name="Bentley D."/>
            <person name="Durbin R.M."/>
            <person name="Hubbard T."/>
            <person name="Doucette-Stamm L."/>
            <person name="Beck S."/>
            <person name="Smith D.R."/>
            <person name="Rogers J."/>
        </authorList>
    </citation>
    <scope>NUCLEOTIDE SEQUENCE [LARGE SCALE GENOMIC DNA]</scope>
</reference>
<reference key="6">
    <citation type="journal article" date="2004" name="Genome Res.">
        <title>The status, quality, and expansion of the NIH full-length cDNA project: the Mammalian Gene Collection (MGC).</title>
        <authorList>
            <consortium name="The MGC Project Team"/>
        </authorList>
    </citation>
    <scope>NUCLEOTIDE SEQUENCE [LARGE SCALE MRNA] (ISOFORM 1)</scope>
    <source>
        <tissue>Heart</tissue>
        <tissue>Lung</tissue>
    </source>
</reference>
<reference key="7">
    <citation type="journal article" date="2006" name="Science">
        <title>The consensus coding sequences of human breast and colorectal cancers.</title>
        <authorList>
            <person name="Sjoeblom T."/>
            <person name="Jones S."/>
            <person name="Wood L.D."/>
            <person name="Parsons D.W."/>
            <person name="Lin J."/>
            <person name="Barber T.D."/>
            <person name="Mandelker D."/>
            <person name="Leary R.J."/>
            <person name="Ptak J."/>
            <person name="Silliman N."/>
            <person name="Szabo S."/>
            <person name="Buckhaults P."/>
            <person name="Farrell C."/>
            <person name="Meeh P."/>
            <person name="Markowitz S.D."/>
            <person name="Willis J."/>
            <person name="Dawson D."/>
            <person name="Willson J.K.V."/>
            <person name="Gazdar A.F."/>
            <person name="Hartigan J."/>
            <person name="Wu L."/>
            <person name="Liu C."/>
            <person name="Parmigiani G."/>
            <person name="Park B.H."/>
            <person name="Bachman K.E."/>
            <person name="Papadopoulos N."/>
            <person name="Vogelstein B."/>
            <person name="Kinzler K.W."/>
            <person name="Velculescu V.E."/>
        </authorList>
    </citation>
    <scope>VARIANT [LARGE SCALE ANALYSIS] ASN-381</scope>
</reference>
<reference key="8">
    <citation type="journal article" date="2007" name="J. Biochem. Mol. Biol.">
        <title>Identification of a novel human zinc finger gene, ZNF438, with transcription inhibition activity.</title>
        <authorList>
            <person name="Zhong Z."/>
            <person name="Wan B."/>
            <person name="Qiu Y."/>
            <person name="Ni J."/>
            <person name="Tang W."/>
            <person name="Chen X."/>
            <person name="Yang Y."/>
            <person name="Shen S."/>
            <person name="Wang Y."/>
            <person name="Bai M."/>
            <person name="Lang Q."/>
            <person name="Yu L."/>
        </authorList>
    </citation>
    <scope>FUNCTION (ISOFORM 1)</scope>
    <scope>SUBCELLULAR LOCATION</scope>
    <scope>TISSUE SPECIFICITY</scope>
</reference>
<evidence type="ECO:0000255" key="1">
    <source>
        <dbReference type="PROSITE-ProRule" id="PRU00042"/>
    </source>
</evidence>
<evidence type="ECO:0000256" key="2">
    <source>
        <dbReference type="SAM" id="MobiDB-lite"/>
    </source>
</evidence>
<evidence type="ECO:0000269" key="3">
    <source>
    </source>
</evidence>
<evidence type="ECO:0000269" key="4">
    <source>
    </source>
</evidence>
<evidence type="ECO:0000269" key="5">
    <source>
    </source>
</evidence>
<evidence type="ECO:0000269" key="6">
    <source>
    </source>
</evidence>
<evidence type="ECO:0000303" key="7">
    <source>
    </source>
</evidence>
<evidence type="ECO:0000303" key="8">
    <source>
    </source>
</evidence>
<evidence type="ECO:0000303" key="9">
    <source ref="1"/>
</evidence>
<evidence type="ECO:0000305" key="10"/>
<sequence length="828" mass="91836">MQNSVSVPPKDEGESNIPSGTIQSRKGLQNKSQFRTIAPKIVPKVLTSRMLPCHSPSRSDQVNLGPSINSKLLGMSTQNYALMQVAGQEGTFSLVALPHVASAQPIQKPRMSLPENLKLPIPRYQPPRNSKASRKKPILIFPKSGCSKAPAQTQMCPQMSPSPPHHPELLYKPSPFEEVPSLEQAPASISTAALTNGSDHGDLRPPVTNTHGSLNPPATPASSTPEEPAKQDLTALSGKAHFVSKITSSKPSAVASEKFKEQVDLAKTMTNLSPTILGNAVQLISSVPKGKLPIPPYSRMKTMEVYKIKSDANIAGFSLPGPKADCDKIPSTTEGFNAATKVASRLPVPQVSQQSACESAFCPPTKLDLNHKTKLNSGAAKRKGRKRKVPDEILAFQGKRRKYIINKCRDGKERVKNDPQEFRDQKLGTLKKYRSIMPKPIMVIPTLASLASPTTLQSQMLGGLGQDVLLNNSLTPKYLGCKQDNSSSPKPSSVFRNGFSGIKKPWHRCHVCNHHFQFKQHLRDHMNTHTNRRPYSCRICRKSYVRPGSLSTHMKLHHGENRLKKLMCCEFCAKVFGHIRVYFGHLKEVHRVVISTEPAPSELQPGDIPKNRDMSVRGMEGSLERENKSNLEEDFLLNQADEVKLQIKCGRCQITAQSFAEIKFHLLDVHGEEIEGRLQEGTFPGSKGTQEELVQHASPDWKRHPERGKPEKVHSSSEESHACPRLKRQLHLHQNGVEMLMENEGPQSGTNKPRETCQGPECPGLHTFLLWSHSGFNCLLCAEMLGRKEDLLHHWKHQHNCEDPSKLWAILNTVSNQGVIELSSEAEK</sequence>
<feature type="chain" id="PRO_0000245847" description="Zinc finger protein 438">
    <location>
        <begin position="1"/>
        <end position="828"/>
    </location>
</feature>
<feature type="zinc finger region" description="C2H2-type 1" evidence="1">
    <location>
        <begin position="507"/>
        <end position="529"/>
    </location>
</feature>
<feature type="zinc finger region" description="C2H2-type 2" evidence="1">
    <location>
        <begin position="535"/>
        <end position="557"/>
    </location>
</feature>
<feature type="zinc finger region" description="C2H2-type 3" evidence="1">
    <location>
        <begin position="567"/>
        <end position="590"/>
    </location>
</feature>
<feature type="zinc finger region" description="C2H2-type 4" evidence="1">
    <location>
        <begin position="776"/>
        <end position="799"/>
    </location>
</feature>
<feature type="region of interest" description="Disordered" evidence="2">
    <location>
        <begin position="1"/>
        <end position="29"/>
    </location>
</feature>
<feature type="region of interest" description="Disordered" evidence="2">
    <location>
        <begin position="143"/>
        <end position="173"/>
    </location>
</feature>
<feature type="region of interest" description="Disordered" evidence="2">
    <location>
        <begin position="193"/>
        <end position="231"/>
    </location>
</feature>
<feature type="region of interest" description="Disordered" evidence="2">
    <location>
        <begin position="680"/>
        <end position="721"/>
    </location>
</feature>
<feature type="compositionally biased region" description="Polar residues" evidence="2">
    <location>
        <begin position="16"/>
        <end position="29"/>
    </location>
</feature>
<feature type="compositionally biased region" description="Polar residues" evidence="2">
    <location>
        <begin position="150"/>
        <end position="159"/>
    </location>
</feature>
<feature type="compositionally biased region" description="Basic and acidic residues" evidence="2">
    <location>
        <begin position="689"/>
        <end position="721"/>
    </location>
</feature>
<feature type="splice variant" id="VSP_019799" description="In isoform 3." evidence="7">
    <location>
        <begin position="1"/>
        <end position="49"/>
    </location>
</feature>
<feature type="splice variant" id="VSP_019800" description="In isoform 2." evidence="8 9">
    <original>MQNSVSVPPKDEG</original>
    <variation>MDS</variation>
    <location>
        <begin position="1"/>
        <end position="13"/>
    </location>
</feature>
<feature type="sequence variant" id="VAR_027013" description="In dbSNP:rs10160116." evidence="3 6">
    <original>P</original>
    <variation>S</variation>
    <location>
        <position position="173"/>
    </location>
</feature>
<feature type="sequence variant" id="VAR_035580" description="In a breast cancer sample; somatic mutation." evidence="4">
    <original>K</original>
    <variation>N</variation>
    <location>
        <position position="381"/>
    </location>
</feature>
<feature type="sequence variant" id="VAR_061946" description="In dbSNP:rs35346752.">
    <original>L</original>
    <variation>V</variation>
    <location>
        <position position="693"/>
    </location>
</feature>
<feature type="sequence conflict" description="In Ref. 3; BAD18510." evidence="10" ref="3">
    <original>D</original>
    <variation>G</variation>
    <location>
        <position position="668"/>
    </location>
</feature>
<proteinExistence type="evidence at protein level"/>
<name>ZN438_HUMAN</name>
<organism>
    <name type="scientific">Homo sapiens</name>
    <name type="common">Human</name>
    <dbReference type="NCBI Taxonomy" id="9606"/>
    <lineage>
        <taxon>Eukaryota</taxon>
        <taxon>Metazoa</taxon>
        <taxon>Chordata</taxon>
        <taxon>Craniata</taxon>
        <taxon>Vertebrata</taxon>
        <taxon>Euteleostomi</taxon>
        <taxon>Mammalia</taxon>
        <taxon>Eutheria</taxon>
        <taxon>Euarchontoglires</taxon>
        <taxon>Primates</taxon>
        <taxon>Haplorrhini</taxon>
        <taxon>Catarrhini</taxon>
        <taxon>Hominidae</taxon>
        <taxon>Homo</taxon>
    </lineage>
</organism>
<protein>
    <recommendedName>
        <fullName>Zinc finger protein 438</fullName>
    </recommendedName>
</protein>
<accession>Q7Z4V0</accession>
<accession>A2A3J4</accession>
<accession>A8K9L5</accession>
<accession>Q5T426</accession>
<accession>Q658Q4</accession>
<accession>Q6ZN65</accession>
<gene>
    <name type="primary">ZNF438</name>
</gene>
<dbReference type="EMBL" id="DQ356012">
    <property type="protein sequence ID" value="ABC86955.1"/>
    <property type="molecule type" value="mRNA"/>
</dbReference>
<dbReference type="EMBL" id="DQ356011">
    <property type="protein sequence ID" value="ABC86954.1"/>
    <property type="molecule type" value="mRNA"/>
</dbReference>
<dbReference type="EMBL" id="AF428258">
    <property type="protein sequence ID" value="AAP97298.1"/>
    <property type="molecule type" value="mRNA"/>
</dbReference>
<dbReference type="EMBL" id="AK131357">
    <property type="protein sequence ID" value="BAD18510.1"/>
    <property type="molecule type" value="mRNA"/>
</dbReference>
<dbReference type="EMBL" id="AK292730">
    <property type="protein sequence ID" value="BAF85419.1"/>
    <property type="molecule type" value="mRNA"/>
</dbReference>
<dbReference type="EMBL" id="AL833056">
    <property type="protein sequence ID" value="CAH56317.1"/>
    <property type="molecule type" value="mRNA"/>
</dbReference>
<dbReference type="EMBL" id="AL359532">
    <property type="status" value="NOT_ANNOTATED_CDS"/>
    <property type="molecule type" value="Genomic_DNA"/>
</dbReference>
<dbReference type="EMBL" id="BC104757">
    <property type="protein sequence ID" value="AAI04758.1"/>
    <property type="molecule type" value="mRNA"/>
</dbReference>
<dbReference type="EMBL" id="BC101622">
    <property type="protein sequence ID" value="AAI01623.1"/>
    <property type="molecule type" value="mRNA"/>
</dbReference>
<dbReference type="CCDS" id="CCDS44369.1">
    <molecule id="Q7Z4V0-2"/>
</dbReference>
<dbReference type="CCDS" id="CCDS53504.1">
    <molecule id="Q7Z4V0-3"/>
</dbReference>
<dbReference type="CCDS" id="CCDS7168.1">
    <molecule id="Q7Z4V0-1"/>
</dbReference>
<dbReference type="RefSeq" id="NP_001137238.1">
    <molecule id="Q7Z4V0-1"/>
    <property type="nucleotide sequence ID" value="NM_001143766.2"/>
</dbReference>
<dbReference type="RefSeq" id="NP_001137239.1">
    <molecule id="Q7Z4V0-1"/>
    <property type="nucleotide sequence ID" value="NM_001143767.2"/>
</dbReference>
<dbReference type="RefSeq" id="NP_001137240.1">
    <molecule id="Q7Z4V0-1"/>
    <property type="nucleotide sequence ID" value="NM_001143768.2"/>
</dbReference>
<dbReference type="RefSeq" id="NP_001137241.1">
    <molecule id="Q7Z4V0-3"/>
    <property type="nucleotide sequence ID" value="NM_001143769.2"/>
</dbReference>
<dbReference type="RefSeq" id="NP_001137242.1">
    <molecule id="Q7Z4V0-2"/>
    <property type="nucleotide sequence ID" value="NM_001143770.2"/>
</dbReference>
<dbReference type="RefSeq" id="NP_001137243.1">
    <molecule id="Q7Z4V0-2"/>
    <property type="nucleotide sequence ID" value="NM_001143771.2"/>
</dbReference>
<dbReference type="RefSeq" id="NP_001374334.1">
    <molecule id="Q7Z4V0-1"/>
    <property type="nucleotide sequence ID" value="NM_001387405.1"/>
</dbReference>
<dbReference type="RefSeq" id="NP_001374340.1">
    <molecule id="Q7Z4V0-1"/>
    <property type="nucleotide sequence ID" value="NM_001387411.1"/>
</dbReference>
<dbReference type="RefSeq" id="NP_001374341.1">
    <molecule id="Q7Z4V0-1"/>
    <property type="nucleotide sequence ID" value="NM_001387412.1"/>
</dbReference>
<dbReference type="RefSeq" id="NP_877432.1">
    <molecule id="Q7Z4V0-1"/>
    <property type="nucleotide sequence ID" value="NM_182755.3"/>
</dbReference>
<dbReference type="RefSeq" id="XP_006717456.1">
    <property type="nucleotide sequence ID" value="XM_006717393.3"/>
</dbReference>
<dbReference type="RefSeq" id="XP_006717459.1">
    <property type="nucleotide sequence ID" value="XM_006717396.3"/>
</dbReference>
<dbReference type="RefSeq" id="XP_006717461.1">
    <property type="nucleotide sequence ID" value="XM_006717398.3"/>
</dbReference>
<dbReference type="RefSeq" id="XP_006717462.1">
    <molecule id="Q7Z4V0-2"/>
    <property type="nucleotide sequence ID" value="XM_006717399.4"/>
</dbReference>
<dbReference type="RefSeq" id="XP_011517673.1">
    <property type="nucleotide sequence ID" value="XM_011519371.2"/>
</dbReference>
<dbReference type="RefSeq" id="XP_011517674.1">
    <molecule id="Q7Z4V0-1"/>
    <property type="nucleotide sequence ID" value="XM_011519372.3"/>
</dbReference>
<dbReference type="RefSeq" id="XP_011517675.1">
    <molecule id="Q7Z4V0-1"/>
    <property type="nucleotide sequence ID" value="XM_011519373.4"/>
</dbReference>
<dbReference type="RefSeq" id="XP_011517676.1">
    <molecule id="Q7Z4V0-1"/>
    <property type="nucleotide sequence ID" value="XM_011519374.3"/>
</dbReference>
<dbReference type="RefSeq" id="XP_011517678.1">
    <molecule id="Q7Z4V0-2"/>
    <property type="nucleotide sequence ID" value="XM_011519376.3"/>
</dbReference>
<dbReference type="RefSeq" id="XP_011517679.1">
    <molecule id="Q7Z4V0-2"/>
    <property type="nucleotide sequence ID" value="XM_011519377.3"/>
</dbReference>
<dbReference type="RefSeq" id="XP_016871353.1">
    <property type="nucleotide sequence ID" value="XM_017015864.1"/>
</dbReference>
<dbReference type="RefSeq" id="XP_016871354.1">
    <property type="nucleotide sequence ID" value="XM_017015865.1"/>
</dbReference>
<dbReference type="RefSeq" id="XP_016871355.1">
    <property type="nucleotide sequence ID" value="XM_017015866.1"/>
</dbReference>
<dbReference type="RefSeq" id="XP_016871356.1">
    <property type="nucleotide sequence ID" value="XM_017015867.1"/>
</dbReference>
<dbReference type="RefSeq" id="XP_016871357.1">
    <property type="nucleotide sequence ID" value="XM_017015868.1"/>
</dbReference>
<dbReference type="RefSeq" id="XP_016871358.1">
    <molecule id="Q7Z4V0-1"/>
    <property type="nucleotide sequence ID" value="XM_017015869.3"/>
</dbReference>
<dbReference type="RefSeq" id="XP_016871359.1">
    <molecule id="Q7Z4V0-1"/>
    <property type="nucleotide sequence ID" value="XM_017015870.3"/>
</dbReference>
<dbReference type="RefSeq" id="XP_016871360.1">
    <property type="nucleotide sequence ID" value="XM_017015871.1"/>
</dbReference>
<dbReference type="RefSeq" id="XP_016871361.1">
    <property type="nucleotide sequence ID" value="XM_017015872.1"/>
</dbReference>
<dbReference type="RefSeq" id="XP_016871362.1">
    <property type="nucleotide sequence ID" value="XM_017015873.1"/>
</dbReference>
<dbReference type="RefSeq" id="XP_016871363.1">
    <property type="nucleotide sequence ID" value="XM_017015874.1"/>
</dbReference>
<dbReference type="RefSeq" id="XP_024303636.1">
    <molecule id="Q7Z4V0-1"/>
    <property type="nucleotide sequence ID" value="XM_024447868.2"/>
</dbReference>
<dbReference type="RefSeq" id="XP_024303637.1">
    <molecule id="Q7Z4V0-1"/>
    <property type="nucleotide sequence ID" value="XM_024447869.2"/>
</dbReference>
<dbReference type="RefSeq" id="XP_024303638.1">
    <molecule id="Q7Z4V0-1"/>
    <property type="nucleotide sequence ID" value="XM_024447870.2"/>
</dbReference>
<dbReference type="RefSeq" id="XP_024303639.1">
    <molecule id="Q7Z4V0-1"/>
    <property type="nucleotide sequence ID" value="XM_024447871.2"/>
</dbReference>
<dbReference type="RefSeq" id="XP_024303640.1">
    <molecule id="Q7Z4V0-1"/>
    <property type="nucleotide sequence ID" value="XM_024447872.2"/>
</dbReference>
<dbReference type="RefSeq" id="XP_024303641.1">
    <molecule id="Q7Z4V0-1"/>
    <property type="nucleotide sequence ID" value="XM_024447873.2"/>
</dbReference>
<dbReference type="RefSeq" id="XP_047280679.1">
    <molecule id="Q7Z4V0-1"/>
    <property type="nucleotide sequence ID" value="XM_047424723.1"/>
</dbReference>
<dbReference type="RefSeq" id="XP_047280680.1">
    <molecule id="Q7Z4V0-1"/>
    <property type="nucleotide sequence ID" value="XM_047424724.1"/>
</dbReference>
<dbReference type="RefSeq" id="XP_047280681.1">
    <molecule id="Q7Z4V0-1"/>
    <property type="nucleotide sequence ID" value="XM_047424725.1"/>
</dbReference>
<dbReference type="RefSeq" id="XP_047280682.1">
    <molecule id="Q7Z4V0-1"/>
    <property type="nucleotide sequence ID" value="XM_047424726.1"/>
</dbReference>
<dbReference type="RefSeq" id="XP_047280683.1">
    <molecule id="Q7Z4V0-1"/>
    <property type="nucleotide sequence ID" value="XM_047424727.1"/>
</dbReference>
<dbReference type="RefSeq" id="XP_047280684.1">
    <molecule id="Q7Z4V0-1"/>
    <property type="nucleotide sequence ID" value="XM_047424728.1"/>
</dbReference>
<dbReference type="RefSeq" id="XP_047280685.1">
    <molecule id="Q7Z4V0-1"/>
    <property type="nucleotide sequence ID" value="XM_047424729.1"/>
</dbReference>
<dbReference type="RefSeq" id="XP_047280686.1">
    <molecule id="Q7Z4V0-1"/>
    <property type="nucleotide sequence ID" value="XM_047424730.1"/>
</dbReference>
<dbReference type="RefSeq" id="XP_047280687.1">
    <molecule id="Q7Z4V0-1"/>
    <property type="nucleotide sequence ID" value="XM_047424731.1"/>
</dbReference>
<dbReference type="RefSeq" id="XP_047280688.1">
    <molecule id="Q7Z4V0-1"/>
    <property type="nucleotide sequence ID" value="XM_047424732.1"/>
</dbReference>
<dbReference type="RefSeq" id="XP_047280689.1">
    <molecule id="Q7Z4V0-1"/>
    <property type="nucleotide sequence ID" value="XM_047424733.1"/>
</dbReference>
<dbReference type="RefSeq" id="XP_047280690.1">
    <molecule id="Q7Z4V0-1"/>
    <property type="nucleotide sequence ID" value="XM_047424734.1"/>
</dbReference>
<dbReference type="RefSeq" id="XP_047280691.1">
    <molecule id="Q7Z4V0-1"/>
    <property type="nucleotide sequence ID" value="XM_047424735.1"/>
</dbReference>
<dbReference type="RefSeq" id="XP_047280692.1">
    <molecule id="Q7Z4V0-1"/>
    <property type="nucleotide sequence ID" value="XM_047424736.1"/>
</dbReference>
<dbReference type="RefSeq" id="XP_047280693.1">
    <molecule id="Q7Z4V0-1"/>
    <property type="nucleotide sequence ID" value="XM_047424737.1"/>
</dbReference>
<dbReference type="RefSeq" id="XP_047280694.1">
    <molecule id="Q7Z4V0-1"/>
    <property type="nucleotide sequence ID" value="XM_047424738.1"/>
</dbReference>
<dbReference type="RefSeq" id="XP_047280695.1">
    <molecule id="Q7Z4V0-1"/>
    <property type="nucleotide sequence ID" value="XM_047424739.1"/>
</dbReference>
<dbReference type="RefSeq" id="XP_047280696.1">
    <molecule id="Q7Z4V0-1"/>
    <property type="nucleotide sequence ID" value="XM_047424740.1"/>
</dbReference>
<dbReference type="RefSeq" id="XP_047280697.1">
    <molecule id="Q7Z4V0-1"/>
    <property type="nucleotide sequence ID" value="XM_047424741.1"/>
</dbReference>
<dbReference type="RefSeq" id="XP_047280698.1">
    <molecule id="Q7Z4V0-1"/>
    <property type="nucleotide sequence ID" value="XM_047424742.1"/>
</dbReference>
<dbReference type="RefSeq" id="XP_047280700.1">
    <molecule id="Q7Z4V0-1"/>
    <property type="nucleotide sequence ID" value="XM_047424744.1"/>
</dbReference>
<dbReference type="RefSeq" id="XP_047280701.1">
    <molecule id="Q7Z4V0-1"/>
    <property type="nucleotide sequence ID" value="XM_047424745.1"/>
</dbReference>
<dbReference type="RefSeq" id="XP_047280702.1">
    <molecule id="Q7Z4V0-1"/>
    <property type="nucleotide sequence ID" value="XM_047424746.1"/>
</dbReference>
<dbReference type="RefSeq" id="XP_047280703.1">
    <molecule id="Q7Z4V0-1"/>
    <property type="nucleotide sequence ID" value="XM_047424747.1"/>
</dbReference>
<dbReference type="RefSeq" id="XP_047280704.1">
    <molecule id="Q7Z4V0-1"/>
    <property type="nucleotide sequence ID" value="XM_047424748.1"/>
</dbReference>
<dbReference type="RefSeq" id="XP_047280705.1">
    <molecule id="Q7Z4V0-1"/>
    <property type="nucleotide sequence ID" value="XM_047424749.1"/>
</dbReference>
<dbReference type="RefSeq" id="XP_047280706.1">
    <molecule id="Q7Z4V0-3"/>
    <property type="nucleotide sequence ID" value="XM_047424750.1"/>
</dbReference>
<dbReference type="BioGRID" id="128661">
    <property type="interactions" value="72"/>
</dbReference>
<dbReference type="FunCoup" id="Q7Z4V0">
    <property type="interactions" value="2061"/>
</dbReference>
<dbReference type="IntAct" id="Q7Z4V0">
    <property type="interactions" value="67"/>
</dbReference>
<dbReference type="MINT" id="Q7Z4V0"/>
<dbReference type="STRING" id="9606.ENSP00000412363"/>
<dbReference type="GlyGen" id="Q7Z4V0">
    <property type="glycosylation" value="2 sites, 1 O-linked glycan (1 site)"/>
</dbReference>
<dbReference type="iPTMnet" id="Q7Z4V0"/>
<dbReference type="PhosphoSitePlus" id="Q7Z4V0"/>
<dbReference type="BioMuta" id="ZNF438"/>
<dbReference type="DMDM" id="74759173"/>
<dbReference type="jPOST" id="Q7Z4V0"/>
<dbReference type="MassIVE" id="Q7Z4V0"/>
<dbReference type="PaxDb" id="9606-ENSP00000412363"/>
<dbReference type="PeptideAtlas" id="Q7Z4V0"/>
<dbReference type="ProteomicsDB" id="69244">
    <molecule id="Q7Z4V0-1"/>
</dbReference>
<dbReference type="ProteomicsDB" id="69245">
    <molecule id="Q7Z4V0-2"/>
</dbReference>
<dbReference type="ProteomicsDB" id="69246">
    <molecule id="Q7Z4V0-3"/>
</dbReference>
<dbReference type="Antibodypedia" id="50888">
    <property type="antibodies" value="14 antibodies from 9 providers"/>
</dbReference>
<dbReference type="DNASU" id="220929"/>
<dbReference type="Ensembl" id="ENST00000331737.10">
    <molecule id="Q7Z4V0-2"/>
    <property type="protein sequence ID" value="ENSP00000333571.6"/>
    <property type="gene ID" value="ENSG00000183621.15"/>
</dbReference>
<dbReference type="Ensembl" id="ENST00000361310.7">
    <molecule id="Q7Z4V0-1"/>
    <property type="protein sequence ID" value="ENSP00000354663.3"/>
    <property type="gene ID" value="ENSG00000183621.15"/>
</dbReference>
<dbReference type="Ensembl" id="ENST00000413025.5">
    <molecule id="Q7Z4V0-1"/>
    <property type="protein sequence ID" value="ENSP00000387546.1"/>
    <property type="gene ID" value="ENSG00000183621.15"/>
</dbReference>
<dbReference type="Ensembl" id="ENST00000436087.7">
    <molecule id="Q7Z4V0-1"/>
    <property type="protein sequence ID" value="ENSP00000406934.2"/>
    <property type="gene ID" value="ENSG00000183621.15"/>
</dbReference>
<dbReference type="Ensembl" id="ENST00000442986.5">
    <molecule id="Q7Z4V0-1"/>
    <property type="protein sequence ID" value="ENSP00000412363.1"/>
    <property type="gene ID" value="ENSG00000183621.15"/>
</dbReference>
<dbReference type="Ensembl" id="ENST00000452305.5">
    <molecule id="Q7Z4V0-2"/>
    <property type="protein sequence ID" value="ENSP00000413060.1"/>
    <property type="gene ID" value="ENSG00000183621.15"/>
</dbReference>
<dbReference type="Ensembl" id="ENST00000538351.6">
    <molecule id="Q7Z4V0-3"/>
    <property type="protein sequence ID" value="ENSP00000445461.1"/>
    <property type="gene ID" value="ENSG00000183621.15"/>
</dbReference>
<dbReference type="GeneID" id="220929"/>
<dbReference type="KEGG" id="hsa:220929"/>
<dbReference type="MANE-Select" id="ENST00000436087.7">
    <property type="protein sequence ID" value="ENSP00000406934.2"/>
    <property type="RefSeq nucleotide sequence ID" value="NM_001143768.2"/>
    <property type="RefSeq protein sequence ID" value="NP_001137240.1"/>
</dbReference>
<dbReference type="UCSC" id="uc001ivn.4">
    <molecule id="Q7Z4V0-1"/>
    <property type="organism name" value="human"/>
</dbReference>
<dbReference type="AGR" id="HGNC:21029"/>
<dbReference type="CTD" id="220929"/>
<dbReference type="DisGeNET" id="220929"/>
<dbReference type="GeneCards" id="ZNF438"/>
<dbReference type="HGNC" id="HGNC:21029">
    <property type="gene designation" value="ZNF438"/>
</dbReference>
<dbReference type="HPA" id="ENSG00000183621">
    <property type="expression patterns" value="Low tissue specificity"/>
</dbReference>
<dbReference type="MIM" id="620749">
    <property type="type" value="gene"/>
</dbReference>
<dbReference type="neXtProt" id="NX_Q7Z4V0"/>
<dbReference type="OpenTargets" id="ENSG00000183621"/>
<dbReference type="PharmGKB" id="PA143485677"/>
<dbReference type="VEuPathDB" id="HostDB:ENSG00000183621"/>
<dbReference type="eggNOG" id="KOG1721">
    <property type="taxonomic scope" value="Eukaryota"/>
</dbReference>
<dbReference type="GeneTree" id="ENSGT00390000014526"/>
<dbReference type="HOGENOM" id="CLU_017961_0_0_1"/>
<dbReference type="InParanoid" id="Q7Z4V0"/>
<dbReference type="OMA" id="APFWKQH"/>
<dbReference type="OrthoDB" id="3437960at2759"/>
<dbReference type="PAN-GO" id="Q7Z4V0">
    <property type="GO annotations" value="4 GO annotations based on evolutionary models"/>
</dbReference>
<dbReference type="PhylomeDB" id="Q7Z4V0"/>
<dbReference type="TreeFam" id="TF332657"/>
<dbReference type="PathwayCommons" id="Q7Z4V0"/>
<dbReference type="SignaLink" id="Q7Z4V0"/>
<dbReference type="BioGRID-ORCS" id="220929">
    <property type="hits" value="8 hits in 1155 CRISPR screens"/>
</dbReference>
<dbReference type="ChiTaRS" id="ZNF438">
    <property type="organism name" value="human"/>
</dbReference>
<dbReference type="GenomeRNAi" id="220929"/>
<dbReference type="Pharos" id="Q7Z4V0">
    <property type="development level" value="Tdark"/>
</dbReference>
<dbReference type="PRO" id="PR:Q7Z4V0"/>
<dbReference type="Proteomes" id="UP000005640">
    <property type="component" value="Chromosome 10"/>
</dbReference>
<dbReference type="RNAct" id="Q7Z4V0">
    <property type="molecule type" value="protein"/>
</dbReference>
<dbReference type="Bgee" id="ENSG00000183621">
    <property type="expression patterns" value="Expressed in tibialis anterior and 162 other cell types or tissues"/>
</dbReference>
<dbReference type="ExpressionAtlas" id="Q7Z4V0">
    <property type="expression patterns" value="baseline and differential"/>
</dbReference>
<dbReference type="GO" id="GO:0005829">
    <property type="term" value="C:cytosol"/>
    <property type="evidence" value="ECO:0000314"/>
    <property type="project" value="HPA"/>
</dbReference>
<dbReference type="GO" id="GO:0005654">
    <property type="term" value="C:nucleoplasm"/>
    <property type="evidence" value="ECO:0000314"/>
    <property type="project" value="HPA"/>
</dbReference>
<dbReference type="GO" id="GO:0005634">
    <property type="term" value="C:nucleus"/>
    <property type="evidence" value="ECO:0000314"/>
    <property type="project" value="UniProtKB"/>
</dbReference>
<dbReference type="GO" id="GO:0003700">
    <property type="term" value="F:DNA-binding transcription factor activity"/>
    <property type="evidence" value="ECO:0000314"/>
    <property type="project" value="UniProtKB"/>
</dbReference>
<dbReference type="GO" id="GO:0000981">
    <property type="term" value="F:DNA-binding transcription factor activity, RNA polymerase II-specific"/>
    <property type="evidence" value="ECO:0000318"/>
    <property type="project" value="GO_Central"/>
</dbReference>
<dbReference type="GO" id="GO:0043565">
    <property type="term" value="F:sequence-specific DNA binding"/>
    <property type="evidence" value="ECO:0000318"/>
    <property type="project" value="GO_Central"/>
</dbReference>
<dbReference type="GO" id="GO:0008270">
    <property type="term" value="F:zinc ion binding"/>
    <property type="evidence" value="ECO:0007669"/>
    <property type="project" value="UniProtKB-KW"/>
</dbReference>
<dbReference type="GO" id="GO:0045892">
    <property type="term" value="P:negative regulation of DNA-templated transcription"/>
    <property type="evidence" value="ECO:0000314"/>
    <property type="project" value="UniProtKB"/>
</dbReference>
<dbReference type="GO" id="GO:0006357">
    <property type="term" value="P:regulation of transcription by RNA polymerase II"/>
    <property type="evidence" value="ECO:0000318"/>
    <property type="project" value="GO_Central"/>
</dbReference>
<dbReference type="FunFam" id="3.30.160.60:FF:000946">
    <property type="entry name" value="Zinc finger protein 438"/>
    <property type="match status" value="1"/>
</dbReference>
<dbReference type="FunFam" id="3.30.160.60:FF:003312">
    <property type="entry name" value="Zinc finger protein 438"/>
    <property type="match status" value="1"/>
</dbReference>
<dbReference type="Gene3D" id="3.30.160.60">
    <property type="entry name" value="Classic Zinc Finger"/>
    <property type="match status" value="2"/>
</dbReference>
<dbReference type="InterPro" id="IPR036236">
    <property type="entry name" value="Znf_C2H2_sf"/>
</dbReference>
<dbReference type="InterPro" id="IPR013087">
    <property type="entry name" value="Znf_C2H2_type"/>
</dbReference>
<dbReference type="PANTHER" id="PTHR24408">
    <property type="entry name" value="ZINC FINGER PROTEIN"/>
    <property type="match status" value="1"/>
</dbReference>
<dbReference type="PANTHER" id="PTHR24408:SF23">
    <property type="entry name" value="ZINC FINGER PROTEIN 438"/>
    <property type="match status" value="1"/>
</dbReference>
<dbReference type="SMART" id="SM00355">
    <property type="entry name" value="ZnF_C2H2"/>
    <property type="match status" value="5"/>
</dbReference>
<dbReference type="SUPFAM" id="SSF57667">
    <property type="entry name" value="beta-beta-alpha zinc fingers"/>
    <property type="match status" value="1"/>
</dbReference>
<dbReference type="PROSITE" id="PS00028">
    <property type="entry name" value="ZINC_FINGER_C2H2_1"/>
    <property type="match status" value="4"/>
</dbReference>
<dbReference type="PROSITE" id="PS50157">
    <property type="entry name" value="ZINC_FINGER_C2H2_2"/>
    <property type="match status" value="3"/>
</dbReference>
<comment type="function">
    <text>Isoform 1 acts as a transcriptional repressor.</text>
</comment>
<comment type="interaction">
    <interactant intactId="EBI-11962468">
        <id>Q7Z4V0</id>
    </interactant>
    <interactant intactId="EBI-12007918">
        <id>O00154-4</id>
        <label>ACOT7</label>
    </interactant>
    <organismsDiffer>false</organismsDiffer>
    <experiments>3</experiments>
</comment>
<comment type="interaction">
    <interactant intactId="EBI-11962468">
        <id>Q7Z4V0</id>
    </interactant>
    <interactant intactId="EBI-1642333">
        <id>Q9BYV9</id>
        <label>BACH2</label>
    </interactant>
    <organismsDiffer>false</organismsDiffer>
    <experiments>3</experiments>
</comment>
<comment type="interaction">
    <interactant intactId="EBI-11962468">
        <id>Q7Z4V0</id>
    </interactant>
    <interactant intactId="EBI-11524452">
        <id>Q8N9N5-2</id>
        <label>BANP</label>
    </interactant>
    <organismsDiffer>false</organismsDiffer>
    <experiments>3</experiments>
</comment>
<comment type="interaction">
    <interactant intactId="EBI-11962468">
        <id>Q7Z4V0</id>
    </interactant>
    <interactant intactId="EBI-17289784">
        <id>Q96PG8</id>
        <label>BBC3</label>
    </interactant>
    <organismsDiffer>false</organismsDiffer>
    <experiments>3</experiments>
</comment>
<comment type="interaction">
    <interactant intactId="EBI-11962468">
        <id>Q7Z4V0</id>
    </interactant>
    <interactant intactId="EBI-358049">
        <id>Q13895</id>
        <label>BYSL</label>
    </interactant>
    <organismsDiffer>false</organismsDiffer>
    <experiments>3</experiments>
</comment>
<comment type="interaction">
    <interactant intactId="EBI-11962468">
        <id>Q7Z4V0</id>
    </interactant>
    <interactant intactId="EBI-5278764">
        <id>Q96GN5</id>
        <label>CDCA7L</label>
    </interactant>
    <organismsDiffer>false</organismsDiffer>
    <experiments>3</experiments>
</comment>
<comment type="interaction">
    <interactant intactId="EBI-11962468">
        <id>Q7Z4V0</id>
    </interactant>
    <interactant intactId="EBI-746238">
        <id>Q07002</id>
        <label>CDK18</label>
    </interactant>
    <organismsDiffer>false</organismsDiffer>
    <experiments>3</experiments>
</comment>
<comment type="interaction">
    <interactant intactId="EBI-11962468">
        <id>Q7Z4V0</id>
    </interactant>
    <interactant intactId="EBI-741885">
        <id>Q96LK0</id>
        <label>CEP19</label>
    </interactant>
    <organismsDiffer>false</organismsDiffer>
    <experiments>3</experiments>
</comment>
<comment type="interaction">
    <interactant intactId="EBI-11962468">
        <id>Q7Z4V0</id>
    </interactant>
    <interactant intactId="EBI-3867333">
        <id>A8MQ03</id>
        <label>CYSRT1</label>
    </interactant>
    <organismsDiffer>false</organismsDiffer>
    <experiments>3</experiments>
</comment>
<comment type="interaction">
    <interactant intactId="EBI-11962468">
        <id>Q7Z4V0</id>
    </interactant>
    <interactant intactId="EBI-9679045">
        <id>Q9NQL9</id>
        <label>DMRT3</label>
    </interactant>
    <organismsDiffer>false</organismsDiffer>
    <experiments>3</experiments>
</comment>
<comment type="interaction">
    <interactant intactId="EBI-11962468">
        <id>Q7Z4V0</id>
    </interactant>
    <interactant intactId="EBI-465363">
        <id>Q96FX2</id>
        <label>DPH3</label>
    </interactant>
    <organismsDiffer>false</organismsDiffer>
    <experiments>3</experiments>
</comment>
<comment type="interaction">
    <interactant intactId="EBI-11962468">
        <id>Q7Z4V0</id>
    </interactant>
    <interactant intactId="EBI-12001340">
        <id>P62508-3</id>
        <label>ESRRG</label>
    </interactant>
    <organismsDiffer>false</organismsDiffer>
    <experiments>3</experiments>
</comment>
<comment type="interaction">
    <interactant intactId="EBI-11962468">
        <id>Q7Z4V0</id>
    </interactant>
    <interactant intactId="EBI-2513774">
        <id>O95363</id>
        <label>FARS2</label>
    </interactant>
    <organismsDiffer>false</organismsDiffer>
    <experiments>3</experiments>
</comment>
<comment type="interaction">
    <interactant intactId="EBI-11962468">
        <id>Q7Z4V0</id>
    </interactant>
    <interactant intactId="EBI-725515">
        <id>O43559</id>
        <label>FRS3</label>
    </interactant>
    <organismsDiffer>false</organismsDiffer>
    <experiments>3</experiments>
</comment>
<comment type="interaction">
    <interactant intactId="EBI-11962468">
        <id>Q7Z4V0</id>
    </interactant>
    <interactant intactId="EBI-11022345">
        <id>P51114-2</id>
        <label>FXR1</label>
    </interactant>
    <organismsDiffer>false</organismsDiffer>
    <experiments>3</experiments>
</comment>
<comment type="interaction">
    <interactant intactId="EBI-11962468">
        <id>Q7Z4V0</id>
    </interactant>
    <interactant intactId="EBI-618309">
        <id>Q08379</id>
        <label>GOLGA2</label>
    </interactant>
    <organismsDiffer>false</organismsDiffer>
    <experiments>3</experiments>
</comment>
<comment type="interaction">
    <interactant intactId="EBI-11962468">
        <id>Q7Z4V0</id>
    </interactant>
    <interactant intactId="EBI-5916454">
        <id>A6NEM1</id>
        <label>GOLGA6L9</label>
    </interactant>
    <organismsDiffer>false</organismsDiffer>
    <experiments>3</experiments>
</comment>
<comment type="interaction">
    <interactant intactId="EBI-11962468">
        <id>Q7Z4V0</id>
    </interactant>
    <interactant intactId="EBI-11956675">
        <id>Q9GZV7</id>
        <label>HAPLN2</label>
    </interactant>
    <organismsDiffer>false</organismsDiffer>
    <experiments>3</experiments>
</comment>
<comment type="interaction">
    <interactant intactId="EBI-11962468">
        <id>Q7Z4V0</id>
    </interactant>
    <interactant intactId="EBI-11954971">
        <id>Q96MP8-2</id>
        <label>KCTD7</label>
    </interactant>
    <organismsDiffer>false</organismsDiffer>
    <experiments>3</experiments>
</comment>
<comment type="interaction">
    <interactant intactId="EBI-11962468">
        <id>Q7Z4V0</id>
    </interactant>
    <interactant intactId="EBI-10171697">
        <id>Q6A162</id>
        <label>KRT40</label>
    </interactant>
    <organismsDiffer>false</organismsDiffer>
    <experiments>3</experiments>
</comment>
<comment type="interaction">
    <interactant intactId="EBI-11962468">
        <id>Q7Z4V0</id>
    </interactant>
    <interactant intactId="EBI-10274069">
        <id>Q8TCE9</id>
        <label>LGALS14</label>
    </interactant>
    <organismsDiffer>false</organismsDiffer>
    <experiments>3</experiments>
</comment>
<comment type="interaction">
    <interactant intactId="EBI-11962468">
        <id>Q7Z4V0</id>
    </interactant>
    <interactant intactId="EBI-746778">
        <id>Q96A72</id>
        <label>MAGOHB</label>
    </interactant>
    <organismsDiffer>false</organismsDiffer>
    <experiments>3</experiments>
</comment>
<comment type="interaction">
    <interactant intactId="EBI-11962468">
        <id>Q7Z4V0</id>
    </interactant>
    <interactant intactId="EBI-307531">
        <id>P23508</id>
        <label>MCC</label>
    </interactant>
    <organismsDiffer>false</organismsDiffer>
    <experiments>3</experiments>
</comment>
<comment type="interaction">
    <interactant intactId="EBI-11962468">
        <id>Q7Z4V0</id>
    </interactant>
    <interactant intactId="EBI-724076">
        <id>Q99750</id>
        <label>MDFI</label>
    </interactant>
    <organismsDiffer>false</organismsDiffer>
    <experiments>3</experiments>
</comment>
<comment type="interaction">
    <interactant intactId="EBI-11962468">
        <id>Q7Z4V0</id>
    </interactant>
    <interactant intactId="EBI-10172526">
        <id>Q9UJV3-2</id>
        <label>MID2</label>
    </interactant>
    <organismsDiffer>false</organismsDiffer>
    <experiments>6</experiments>
</comment>
<comment type="interaction">
    <interactant intactId="EBI-11962468">
        <id>Q7Z4V0</id>
    </interactant>
    <interactant intactId="EBI-10288852">
        <id>Q9UBU8-2</id>
        <label>MORF4L1</label>
    </interactant>
    <organismsDiffer>false</organismsDiffer>
    <experiments>3</experiments>
</comment>
<comment type="interaction">
    <interactant intactId="EBI-11962468">
        <id>Q7Z4V0</id>
    </interactant>
    <interactant intactId="EBI-9675802">
        <id>Q6PF18</id>
        <label>MORN3</label>
    </interactant>
    <organismsDiffer>false</organismsDiffer>
    <experiments>3</experiments>
</comment>
<comment type="interaction">
    <interactant intactId="EBI-11962468">
        <id>Q7Z4V0</id>
    </interactant>
    <interactant intactId="EBI-5453723">
        <id>Q9Y3B7</id>
        <label>MRPL11</label>
    </interactant>
    <organismsDiffer>false</organismsDiffer>
    <experiments>3</experiments>
</comment>
<comment type="interaction">
    <interactant intactId="EBI-11962468">
        <id>Q7Z4V0</id>
    </interactant>
    <interactant intactId="EBI-11522433">
        <id>Q5JR59-3</id>
        <label>MTUS2</label>
    </interactant>
    <organismsDiffer>false</organismsDiffer>
    <experiments>3</experiments>
</comment>
<comment type="interaction">
    <interactant intactId="EBI-11962468">
        <id>Q7Z4V0</id>
    </interactant>
    <interactant intactId="EBI-6952711">
        <id>Q8WY64</id>
        <label>MYLIP</label>
    </interactant>
    <organismsDiffer>false</organismsDiffer>
    <experiments>3</experiments>
</comment>
<comment type="interaction">
    <interactant intactId="EBI-11962468">
        <id>Q7Z4V0</id>
    </interactant>
    <interactant intactId="EBI-7950783">
        <id>Q96JP2</id>
        <label>MYO15B</label>
    </interactant>
    <organismsDiffer>false</organismsDiffer>
    <experiments>3</experiments>
</comment>
<comment type="interaction">
    <interactant intactId="EBI-11962468">
        <id>Q7Z4V0</id>
    </interactant>
    <interactant intactId="EBI-11750983">
        <id>Q9HC98-4</id>
        <label>NEK6</label>
    </interactant>
    <organismsDiffer>false</organismsDiffer>
    <experiments>3</experiments>
</comment>
<comment type="interaction">
    <interactant intactId="EBI-11962468">
        <id>Q7Z4V0</id>
    </interactant>
    <interactant intactId="EBI-398874">
        <id>Q9UBU9</id>
        <label>NXF1</label>
    </interactant>
    <organismsDiffer>false</organismsDiffer>
    <experiments>3</experiments>
</comment>
<comment type="interaction">
    <interactant intactId="EBI-11962468">
        <id>Q7Z4V0</id>
    </interactant>
    <interactant intactId="EBI-14066006">
        <id>Q4G0R1</id>
        <label>PIBF1</label>
    </interactant>
    <organismsDiffer>false</organismsDiffer>
    <experiments>3</experiments>
</comment>
<comment type="interaction">
    <interactant intactId="EBI-11962468">
        <id>Q7Z4V0</id>
    </interactant>
    <interactant intactId="EBI-79165">
        <id>Q9NRD5</id>
        <label>PICK1</label>
    </interactant>
    <organismsDiffer>false</organismsDiffer>
    <experiments>3</experiments>
</comment>
<comment type="interaction">
    <interactant intactId="EBI-11962468">
        <id>Q7Z4V0</id>
    </interactant>
    <interactant intactId="EBI-10232538">
        <id>Q8WWB5</id>
        <label>PIH1D2</label>
    </interactant>
    <organismsDiffer>false</organismsDiffer>
    <experiments>3</experiments>
</comment>
<comment type="interaction">
    <interactant intactId="EBI-11962468">
        <id>Q7Z4V0</id>
    </interactant>
    <interactant intactId="EBI-12014286">
        <id>Q494U1-3</id>
        <label>PLEKHN1</label>
    </interactant>
    <organismsDiffer>false</organismsDiffer>
    <experiments>3</experiments>
</comment>
<comment type="interaction">
    <interactant intactId="EBI-11962468">
        <id>Q7Z4V0</id>
    </interactant>
    <interactant intactId="EBI-302345">
        <id>Q8ND90</id>
        <label>PNMA1</label>
    </interactant>
    <organismsDiffer>false</organismsDiffer>
    <experiments>3</experiments>
</comment>
<comment type="interaction">
    <interactant intactId="EBI-11962468">
        <id>Q7Z4V0</id>
    </interactant>
    <interactant intactId="EBI-3215577">
        <id>Q9NVM4</id>
        <label>PRMT7</label>
    </interactant>
    <organismsDiffer>false</organismsDiffer>
    <experiments>3</experiments>
</comment>
<comment type="interaction">
    <interactant intactId="EBI-11962468">
        <id>Q7Z4V0</id>
    </interactant>
    <interactant intactId="EBI-372273">
        <id>P20618</id>
        <label>PSMB1</label>
    </interactant>
    <organismsDiffer>false</organismsDiffer>
    <experiments>3</experiments>
</comment>
<comment type="interaction">
    <interactant intactId="EBI-11962468">
        <id>Q7Z4V0</id>
    </interactant>
    <interactant intactId="EBI-447043">
        <id>Q15276</id>
        <label>RABEP1</label>
    </interactant>
    <organismsDiffer>false</organismsDiffer>
    <experiments>3</experiments>
</comment>
<comment type="interaction">
    <interactant intactId="EBI-11962468">
        <id>Q7Z4V0</id>
    </interactant>
    <interactant intactId="EBI-10253121">
        <id>Q6P9E2</id>
        <label>RECK</label>
    </interactant>
    <organismsDiffer>false</organismsDiffer>
    <experiments>3</experiments>
</comment>
<comment type="interaction">
    <interactant intactId="EBI-11962468">
        <id>Q7Z4V0</id>
    </interactant>
    <interactant intactId="EBI-366570">
        <id>Q9BUL9</id>
        <label>RPP25</label>
    </interactant>
    <organismsDiffer>false</organismsDiffer>
    <experiments>3</experiments>
</comment>
<comment type="interaction">
    <interactant intactId="EBI-11962468">
        <id>Q7Z4V0</id>
    </interactant>
    <interactant intactId="EBI-748391">
        <id>Q9BWG6</id>
        <label>SCNM1</label>
    </interactant>
    <organismsDiffer>false</organismsDiffer>
    <experiments>3</experiments>
</comment>
<comment type="interaction">
    <interactant intactId="EBI-11962468">
        <id>Q7Z4V0</id>
    </interactant>
    <interactant intactId="EBI-7481343">
        <id>Q01105-2</id>
        <label>SET</label>
    </interactant>
    <organismsDiffer>false</organismsDiffer>
    <experiments>3</experiments>
</comment>
<comment type="interaction">
    <interactant intactId="EBI-11962468">
        <id>Q7Z4V0</id>
    </interactant>
    <interactant intactId="EBI-358489">
        <id>Q96GM5</id>
        <label>SMARCD1</label>
    </interactant>
    <organismsDiffer>false</organismsDiffer>
    <experiments>3</experiments>
</comment>
<comment type="interaction">
    <interactant intactId="EBI-11962468">
        <id>Q7Z4V0</id>
    </interactant>
    <interactant intactId="EBI-12023934">
        <id>Q5MJ10</id>
        <label>SPANXN2</label>
    </interactant>
    <organismsDiffer>false</organismsDiffer>
    <experiments>3</experiments>
</comment>
<comment type="interaction">
    <interactant intactId="EBI-11962468">
        <id>Q7Z4V0</id>
    </interactant>
    <interactant intactId="EBI-2212028">
        <id>Q9Y2D8</id>
        <label>SSX2IP</label>
    </interactant>
    <organismsDiffer>false</organismsDiffer>
    <experiments>3</experiments>
</comment>
<comment type="interaction">
    <interactant intactId="EBI-11962468">
        <id>Q7Z4V0</id>
    </interactant>
    <interactant intactId="EBI-349968">
        <id>O43463</id>
        <label>SUV39H1</label>
    </interactant>
    <organismsDiffer>false</organismsDiffer>
    <experiments>3</experiments>
</comment>
<comment type="interaction">
    <interactant intactId="EBI-11962468">
        <id>Q7Z4V0</id>
    </interactant>
    <interactant intactId="EBI-745392">
        <id>Q9BSW7</id>
        <label>SYT17</label>
    </interactant>
    <organismsDiffer>false</organismsDiffer>
    <experiments>3</experiments>
</comment>
<comment type="interaction">
    <interactant intactId="EBI-11962468">
        <id>Q7Z4V0</id>
    </interactant>
    <interactant intactId="EBI-8787464">
        <id>Q9NU19</id>
        <label>TBC1D22B</label>
    </interactant>
    <organismsDiffer>false</organismsDiffer>
    <experiments>3</experiments>
</comment>
<comment type="interaction">
    <interactant intactId="EBI-11962468">
        <id>Q7Z4V0</id>
    </interactant>
    <interactant intactId="EBI-11952721">
        <id>Q05BL1</id>
        <label>TP53BP2</label>
    </interactant>
    <organismsDiffer>false</organismsDiffer>
    <experiments>3</experiments>
</comment>
<comment type="interaction">
    <interactant intactId="EBI-11962468">
        <id>Q7Z4V0</id>
    </interactant>
    <interactant intactId="EBI-355744">
        <id>Q12933</id>
        <label>TRAF2</label>
    </interactant>
    <organismsDiffer>false</organismsDiffer>
    <experiments>3</experiments>
</comment>
<comment type="interaction">
    <interactant intactId="EBI-11962468">
        <id>Q7Z4V0</id>
    </interactant>
    <interactant intactId="EBI-11961968">
        <id>P0DI81-3</id>
        <label>TRAPPC2</label>
    </interactant>
    <organismsDiffer>false</organismsDiffer>
    <experiments>3</experiments>
</comment>
<comment type="interaction">
    <interactant intactId="EBI-11962468">
        <id>Q7Z4V0</id>
    </interactant>
    <interactant intactId="EBI-9867283">
        <id>Q86XT4</id>
        <label>TRIM50</label>
    </interactant>
    <organismsDiffer>false</organismsDiffer>
    <experiments>3</experiments>
</comment>
<comment type="interaction">
    <interactant intactId="EBI-11962468">
        <id>Q7Z4V0</id>
    </interactant>
    <interactant intactId="EBI-744794">
        <id>Q9BZW7</id>
        <label>TSGA10</label>
    </interactant>
    <organismsDiffer>false</organismsDiffer>
    <experiments>3</experiments>
</comment>
<comment type="interaction">
    <interactant intactId="EBI-11962468">
        <id>Q7Z4V0</id>
    </interactant>
    <interactant intactId="EBI-8994397">
        <id>Q5T7W7</id>
        <label>TSTD2</label>
    </interactant>
    <organismsDiffer>false</organismsDiffer>
    <experiments>3</experiments>
</comment>
<comment type="interaction">
    <interactant intactId="EBI-11962468">
        <id>Q7Z4V0</id>
    </interactant>
    <interactant intactId="EBI-515331">
        <id>P07947</id>
        <label>YES1</label>
    </interactant>
    <organismsDiffer>false</organismsDiffer>
    <experiments>3</experiments>
</comment>
<comment type="interaction">
    <interactant intactId="EBI-11962468">
        <id>Q7Z4V0</id>
    </interactant>
    <interactant intactId="EBI-742740">
        <id>Q96BR9</id>
        <label>ZBTB8A</label>
    </interactant>
    <organismsDiffer>false</organismsDiffer>
    <experiments>3</experiments>
</comment>
<comment type="interaction">
    <interactant intactId="EBI-11962468">
        <id>Q7Z4V0</id>
    </interactant>
    <interactant intactId="EBI-2849334">
        <id>P52747</id>
        <label>ZNF143</label>
    </interactant>
    <organismsDiffer>false</organismsDiffer>
    <experiments>3</experiments>
</comment>
<comment type="interaction">
    <interactant intactId="EBI-11962468">
        <id>Q7Z4V0</id>
    </interactant>
    <interactant intactId="EBI-1105334">
        <id>P17021</id>
        <label>ZNF17</label>
    </interactant>
    <organismsDiffer>false</organismsDiffer>
    <experiments>3</experiments>
</comment>
<comment type="interaction">
    <interactant intactId="EBI-11962468">
        <id>Q7Z4V0</id>
    </interactant>
    <interactant intactId="EBI-751960">
        <id>O95125</id>
        <label>ZNF202</label>
    </interactant>
    <organismsDiffer>false</organismsDiffer>
    <experiments>3</experiments>
</comment>
<comment type="interaction">
    <interactant intactId="EBI-11962468">
        <id>Q7Z4V0</id>
    </interactant>
    <interactant intactId="EBI-11035148">
        <id>Q8TF50</id>
        <label>ZNF526</label>
    </interactant>
    <organismsDiffer>false</organismsDiffer>
    <experiments>3</experiments>
</comment>
<comment type="interaction">
    <interactant intactId="EBI-11962468">
        <id>Q7Z4V0</id>
    </interactant>
    <interactant intactId="EBI-9977294">
        <id>Q9UEG4</id>
        <label>ZNF629</label>
    </interactant>
    <organismsDiffer>false</organismsDiffer>
    <experiments>3</experiments>
</comment>
<comment type="interaction">
    <interactant intactId="EBI-11962468">
        <id>Q7Z4V0</id>
    </interactant>
    <interactant intactId="EBI-11985915">
        <id>Q5T619</id>
        <label>ZNF648</label>
    </interactant>
    <organismsDiffer>false</organismsDiffer>
    <experiments>3</experiments>
</comment>
<comment type="interaction">
    <interactant intactId="EBI-11962468">
        <id>Q7Z4V0</id>
    </interactant>
    <interactant intactId="EBI-527853">
        <id>Q9UGI0</id>
        <label>ZRANB1</label>
    </interactant>
    <organismsDiffer>false</organismsDiffer>
    <experiments>3</experiments>
</comment>
<comment type="subcellular location">
    <subcellularLocation>
        <location evidence="5">Nucleus</location>
    </subcellularLocation>
</comment>
<comment type="alternative products">
    <event type="alternative splicing"/>
    <isoform>
        <id>Q7Z4V0-1</id>
        <name>1</name>
        <sequence type="displayed"/>
    </isoform>
    <isoform>
        <id>Q7Z4V0-2</id>
        <name>2</name>
        <sequence type="described" ref="VSP_019800"/>
    </isoform>
    <isoform>
        <id>Q7Z4V0-3</id>
        <name>3</name>
        <sequence type="described" ref="VSP_019799"/>
    </isoform>
</comment>
<comment type="tissue specificity">
    <text evidence="5">Ubiquitous.</text>
</comment>
<comment type="similarity">
    <text evidence="10">Belongs to the krueppel C2H2-type zinc-finger protein family.</text>
</comment>
<keyword id="KW-0025">Alternative splicing</keyword>
<keyword id="KW-0238">DNA-binding</keyword>
<keyword id="KW-0479">Metal-binding</keyword>
<keyword id="KW-0539">Nucleus</keyword>
<keyword id="KW-1267">Proteomics identification</keyword>
<keyword id="KW-1185">Reference proteome</keyword>
<keyword id="KW-0677">Repeat</keyword>
<keyword id="KW-0678">Repressor</keyword>
<keyword id="KW-0804">Transcription</keyword>
<keyword id="KW-0805">Transcription regulation</keyword>
<keyword id="KW-0862">Zinc</keyword>
<keyword id="KW-0863">Zinc-finger</keyword>